<dbReference type="EMBL" id="CP001020">
    <property type="protein sequence ID" value="ACJ19569.1"/>
    <property type="molecule type" value="Genomic_DNA"/>
</dbReference>
<dbReference type="RefSeq" id="WP_005770421.1">
    <property type="nucleotide sequence ID" value="NC_011528.1"/>
</dbReference>
<dbReference type="SMR" id="B6J4G5"/>
<dbReference type="KEGG" id="cbc:CbuK_0258"/>
<dbReference type="HOGENOM" id="CLU_082184_2_2_6"/>
<dbReference type="GO" id="GO:0022625">
    <property type="term" value="C:cytosolic large ribosomal subunit"/>
    <property type="evidence" value="ECO:0007669"/>
    <property type="project" value="TreeGrafter"/>
</dbReference>
<dbReference type="GO" id="GO:0003729">
    <property type="term" value="F:mRNA binding"/>
    <property type="evidence" value="ECO:0007669"/>
    <property type="project" value="TreeGrafter"/>
</dbReference>
<dbReference type="GO" id="GO:0003735">
    <property type="term" value="F:structural constituent of ribosome"/>
    <property type="evidence" value="ECO:0007669"/>
    <property type="project" value="InterPro"/>
</dbReference>
<dbReference type="GO" id="GO:0017148">
    <property type="term" value="P:negative regulation of translation"/>
    <property type="evidence" value="ECO:0007669"/>
    <property type="project" value="TreeGrafter"/>
</dbReference>
<dbReference type="GO" id="GO:0006412">
    <property type="term" value="P:translation"/>
    <property type="evidence" value="ECO:0007669"/>
    <property type="project" value="UniProtKB-UniRule"/>
</dbReference>
<dbReference type="CDD" id="cd00392">
    <property type="entry name" value="Ribosomal_L13"/>
    <property type="match status" value="1"/>
</dbReference>
<dbReference type="FunFam" id="3.90.1180.10:FF:000001">
    <property type="entry name" value="50S ribosomal protein L13"/>
    <property type="match status" value="1"/>
</dbReference>
<dbReference type="Gene3D" id="3.90.1180.10">
    <property type="entry name" value="Ribosomal protein L13"/>
    <property type="match status" value="1"/>
</dbReference>
<dbReference type="HAMAP" id="MF_01366">
    <property type="entry name" value="Ribosomal_uL13"/>
    <property type="match status" value="1"/>
</dbReference>
<dbReference type="InterPro" id="IPR005822">
    <property type="entry name" value="Ribosomal_uL13"/>
</dbReference>
<dbReference type="InterPro" id="IPR005823">
    <property type="entry name" value="Ribosomal_uL13_bac-type"/>
</dbReference>
<dbReference type="InterPro" id="IPR023563">
    <property type="entry name" value="Ribosomal_uL13_CS"/>
</dbReference>
<dbReference type="InterPro" id="IPR036899">
    <property type="entry name" value="Ribosomal_uL13_sf"/>
</dbReference>
<dbReference type="NCBIfam" id="TIGR01066">
    <property type="entry name" value="rplM_bact"/>
    <property type="match status" value="1"/>
</dbReference>
<dbReference type="PANTHER" id="PTHR11545:SF2">
    <property type="entry name" value="LARGE RIBOSOMAL SUBUNIT PROTEIN UL13M"/>
    <property type="match status" value="1"/>
</dbReference>
<dbReference type="PANTHER" id="PTHR11545">
    <property type="entry name" value="RIBOSOMAL PROTEIN L13"/>
    <property type="match status" value="1"/>
</dbReference>
<dbReference type="Pfam" id="PF00572">
    <property type="entry name" value="Ribosomal_L13"/>
    <property type="match status" value="1"/>
</dbReference>
<dbReference type="PIRSF" id="PIRSF002181">
    <property type="entry name" value="Ribosomal_L13"/>
    <property type="match status" value="1"/>
</dbReference>
<dbReference type="SUPFAM" id="SSF52161">
    <property type="entry name" value="Ribosomal protein L13"/>
    <property type="match status" value="1"/>
</dbReference>
<dbReference type="PROSITE" id="PS00783">
    <property type="entry name" value="RIBOSOMAL_L13"/>
    <property type="match status" value="1"/>
</dbReference>
<gene>
    <name evidence="1" type="primary">rplM</name>
    <name type="ordered locus">CbuK_0258</name>
</gene>
<accession>B6J4G5</accession>
<comment type="function">
    <text evidence="1">This protein is one of the early assembly proteins of the 50S ribosomal subunit, although it is not seen to bind rRNA by itself. It is important during the early stages of 50S assembly.</text>
</comment>
<comment type="subunit">
    <text evidence="1">Part of the 50S ribosomal subunit.</text>
</comment>
<comment type="similarity">
    <text evidence="1">Belongs to the universal ribosomal protein uL13 family.</text>
</comment>
<name>RL13_COXB1</name>
<evidence type="ECO:0000255" key="1">
    <source>
        <dbReference type="HAMAP-Rule" id="MF_01366"/>
    </source>
</evidence>
<evidence type="ECO:0000305" key="2"/>
<sequence length="142" mass="15811">MATYMANAKTVSPRWLLVNAEGKTLGRLASRIAAILRGKHKAEFTPHVDAGDFVVVINVDKLKVTGNKTQDKQYHHHSGYPGGLKTINFADLQAKKPQRILELAIKGMLPKGPLGRQLYRKLKIYAGDQHPHQAQQPELIDL</sequence>
<reference key="1">
    <citation type="journal article" date="2009" name="Infect. Immun.">
        <title>Comparative genomics reveal extensive transposon-mediated genomic plasticity and diversity among potential effector proteins within the genus Coxiella.</title>
        <authorList>
            <person name="Beare P.A."/>
            <person name="Unsworth N."/>
            <person name="Andoh M."/>
            <person name="Voth D.E."/>
            <person name="Omsland A."/>
            <person name="Gilk S.D."/>
            <person name="Williams K.P."/>
            <person name="Sobral B.W."/>
            <person name="Kupko J.J. III"/>
            <person name="Porcella S.F."/>
            <person name="Samuel J.E."/>
            <person name="Heinzen R.A."/>
        </authorList>
    </citation>
    <scope>NUCLEOTIDE SEQUENCE [LARGE SCALE GENOMIC DNA]</scope>
    <source>
        <strain>CbuK_Q154</strain>
    </source>
</reference>
<proteinExistence type="inferred from homology"/>
<protein>
    <recommendedName>
        <fullName evidence="1">Large ribosomal subunit protein uL13</fullName>
    </recommendedName>
    <alternativeName>
        <fullName evidence="2">50S ribosomal protein L13</fullName>
    </alternativeName>
</protein>
<feature type="chain" id="PRO_1000144111" description="Large ribosomal subunit protein uL13">
    <location>
        <begin position="1"/>
        <end position="142"/>
    </location>
</feature>
<organism>
    <name type="scientific">Coxiella burnetii (strain CbuK_Q154)</name>
    <name type="common">Coxiella burnetii (strain Q154)</name>
    <dbReference type="NCBI Taxonomy" id="434924"/>
    <lineage>
        <taxon>Bacteria</taxon>
        <taxon>Pseudomonadati</taxon>
        <taxon>Pseudomonadota</taxon>
        <taxon>Gammaproteobacteria</taxon>
        <taxon>Legionellales</taxon>
        <taxon>Coxiellaceae</taxon>
        <taxon>Coxiella</taxon>
    </lineage>
</organism>
<keyword id="KW-0687">Ribonucleoprotein</keyword>
<keyword id="KW-0689">Ribosomal protein</keyword>